<organism>
    <name type="scientific">Acanthamoeba polyphaga mimivirus</name>
    <name type="common">APMV</name>
    <dbReference type="NCBI Taxonomy" id="212035"/>
    <lineage>
        <taxon>Viruses</taxon>
        <taxon>Varidnaviria</taxon>
        <taxon>Bamfordvirae</taxon>
        <taxon>Nucleocytoviricota</taxon>
        <taxon>Megaviricetes</taxon>
        <taxon>Imitervirales</taxon>
        <taxon>Mimiviridae</taxon>
        <taxon>Megamimivirinae</taxon>
        <taxon>Mimivirus</taxon>
        <taxon>Mimivirus bradfordmassiliense</taxon>
    </lineage>
</organism>
<sequence>MCVEMKNKTNTTIPSQPQIPIQPSILPTQQTISPIPQIIPPTQPTLPKLQLDPILGSNGIPIANQEWSGTEYVRTNDPTKFIVITKTLDPKIARFLPTFKKPVITDIINKTSNSTLDMNKIITTNNFNVENAKALANFGNSCYFGTSMQLLFVMFHVRNFIVKNSNFTETGISIDLKNAYDSIKNLFITMNTAPKNDPIKSFPDYPNVKKQIMKEPDPVQMLEEDAEEFITQFMSDLDPKARNLALIKGNEYIYDVSNAQLNRQQSFSNIFNLIPLDIIKSNPTDTLENILSKTYTMVELREGVNTIQNPITSDYEFTYFVNQPTILPEYFLVRLNMVDPTSTNKLRHNIQINTTLVLTINGQTTTYFALAIIVHRGNSIRTGHYTCLVFDNQTGSQFQYIFYDDSLSSLVSIPTNSKIIPSNLYLKNITDSAYIILYGDITKLR</sequence>
<feature type="chain" id="PRO_0000251133" description="Putative ubiquitin carboxyl-terminal hydrolase L293">
    <location>
        <begin position="1"/>
        <end position="445"/>
    </location>
</feature>
<feature type="domain" description="USP">
    <location>
        <begin position="133"/>
        <end position="441"/>
    </location>
</feature>
<feature type="active site" description="Nucleophile" evidence="1">
    <location>
        <position position="142"/>
    </location>
</feature>
<feature type="active site" description="Proton acceptor" evidence="1">
    <location>
        <position position="384"/>
    </location>
</feature>
<proteinExistence type="evidence at protein level"/>
<dbReference type="EC" id="3.4.19.12"/>
<dbReference type="EMBL" id="AY653733">
    <property type="protein sequence ID" value="AAV50565.1"/>
    <property type="molecule type" value="Genomic_DNA"/>
</dbReference>
<dbReference type="SMR" id="Q5UPW7"/>
<dbReference type="KEGG" id="vg:9924908"/>
<dbReference type="OrthoDB" id="10446at10239"/>
<dbReference type="Proteomes" id="UP000001134">
    <property type="component" value="Genome"/>
</dbReference>
<dbReference type="GO" id="GO:0044423">
    <property type="term" value="C:virion component"/>
    <property type="evidence" value="ECO:0007669"/>
    <property type="project" value="UniProtKB-KW"/>
</dbReference>
<dbReference type="GO" id="GO:0004843">
    <property type="term" value="F:cysteine-type deubiquitinase activity"/>
    <property type="evidence" value="ECO:0007669"/>
    <property type="project" value="UniProtKB-EC"/>
</dbReference>
<dbReference type="GO" id="GO:0016579">
    <property type="term" value="P:protein deubiquitination"/>
    <property type="evidence" value="ECO:0007669"/>
    <property type="project" value="InterPro"/>
</dbReference>
<dbReference type="GO" id="GO:0006508">
    <property type="term" value="P:proteolysis"/>
    <property type="evidence" value="ECO:0007669"/>
    <property type="project" value="UniProtKB-KW"/>
</dbReference>
<dbReference type="CDD" id="cd02257">
    <property type="entry name" value="Peptidase_C19"/>
    <property type="match status" value="1"/>
</dbReference>
<dbReference type="Gene3D" id="3.90.70.10">
    <property type="entry name" value="Cysteine proteinases"/>
    <property type="match status" value="1"/>
</dbReference>
<dbReference type="InterPro" id="IPR038765">
    <property type="entry name" value="Papain-like_cys_pep_sf"/>
</dbReference>
<dbReference type="InterPro" id="IPR050164">
    <property type="entry name" value="Peptidase_C19"/>
</dbReference>
<dbReference type="InterPro" id="IPR001394">
    <property type="entry name" value="Peptidase_C19_UCH"/>
</dbReference>
<dbReference type="InterPro" id="IPR028889">
    <property type="entry name" value="USP_dom"/>
</dbReference>
<dbReference type="PANTHER" id="PTHR24006">
    <property type="entry name" value="UBIQUITIN CARBOXYL-TERMINAL HYDROLASE"/>
    <property type="match status" value="1"/>
</dbReference>
<dbReference type="PANTHER" id="PTHR24006:SF687">
    <property type="entry name" value="UBIQUITIN CARBOXYL-TERMINAL HYDROLASE 10"/>
    <property type="match status" value="1"/>
</dbReference>
<dbReference type="Pfam" id="PF00443">
    <property type="entry name" value="UCH"/>
    <property type="match status" value="1"/>
</dbReference>
<dbReference type="SUPFAM" id="SSF54001">
    <property type="entry name" value="Cysteine proteinases"/>
    <property type="match status" value="1"/>
</dbReference>
<dbReference type="PROSITE" id="PS50235">
    <property type="entry name" value="USP_3"/>
    <property type="match status" value="1"/>
</dbReference>
<evidence type="ECO:0000250" key="1"/>
<evidence type="ECO:0000269" key="2">
    <source>
    </source>
</evidence>
<evidence type="ECO:0000305" key="3"/>
<gene>
    <name type="ordered locus">MIMI_L293</name>
</gene>
<accession>Q5UPW7</accession>
<name>UBPL2_MIMIV</name>
<reference key="1">
    <citation type="journal article" date="2004" name="Science">
        <title>The 1.2-megabase genome sequence of Mimivirus.</title>
        <authorList>
            <person name="Raoult D."/>
            <person name="Audic S."/>
            <person name="Robert C."/>
            <person name="Abergel C."/>
            <person name="Renesto P."/>
            <person name="Ogata H."/>
            <person name="La Scola B."/>
            <person name="Susan M."/>
            <person name="Claverie J.-M."/>
        </authorList>
    </citation>
    <scope>NUCLEOTIDE SEQUENCE [GENOMIC DNA]</scope>
    <source>
        <strain>Rowbotham-Bradford</strain>
    </source>
</reference>
<reference key="2">
    <citation type="journal article" date="2006" name="J. Virol.">
        <title>Mimivirus giant particles incorporate a large fraction of anonymous and unique gene products.</title>
        <authorList>
            <person name="Renesto P."/>
            <person name="Abergel C."/>
            <person name="Decloquement P."/>
            <person name="Moinier D."/>
            <person name="Azza S."/>
            <person name="Ogata H."/>
            <person name="Fourquet P."/>
            <person name="Gorvel J.-P."/>
            <person name="Claverie J.-M."/>
            <person name="Raoult D."/>
        </authorList>
    </citation>
    <scope>IDENTIFICATION BY MASS SPECTROMETRY [LARGE SCALE ANALYSIS]</scope>
    <scope>SUBCELLULAR LOCATION</scope>
</reference>
<keyword id="KW-0378">Hydrolase</keyword>
<keyword id="KW-0645">Protease</keyword>
<keyword id="KW-1185">Reference proteome</keyword>
<keyword id="KW-0788">Thiol protease</keyword>
<keyword id="KW-0833">Ubl conjugation pathway</keyword>
<keyword id="KW-0946">Virion</keyword>
<protein>
    <recommendedName>
        <fullName>Putative ubiquitin carboxyl-terminal hydrolase L293</fullName>
        <ecNumber>3.4.19.12</ecNumber>
    </recommendedName>
    <alternativeName>
        <fullName>Deubiquitinating enzyme L293</fullName>
    </alternativeName>
    <alternativeName>
        <fullName>Ubiquitin thioesterase L293</fullName>
    </alternativeName>
    <alternativeName>
        <fullName>Ubiquitin-specific-processing protease L293</fullName>
    </alternativeName>
</protein>
<organismHost>
    <name type="scientific">Acanthamoeba polyphaga</name>
    <name type="common">Amoeba</name>
    <dbReference type="NCBI Taxonomy" id="5757"/>
</organismHost>
<comment type="catalytic activity">
    <reaction>
        <text>Thiol-dependent hydrolysis of ester, thioester, amide, peptide and isopeptide bonds formed by the C-terminal Gly of ubiquitin (a 76-residue protein attached to proteins as an intracellular targeting signal).</text>
        <dbReference type="EC" id="3.4.19.12"/>
    </reaction>
</comment>
<comment type="subcellular location">
    <subcellularLocation>
        <location evidence="2">Virion</location>
    </subcellularLocation>
</comment>
<comment type="similarity">
    <text evidence="3">Belongs to the peptidase C19 family.</text>
</comment>